<feature type="chain" id="PRO_1000123050" description="Lipid-A-disaccharide synthase">
    <location>
        <begin position="1"/>
        <end position="383"/>
    </location>
</feature>
<gene>
    <name evidence="1" type="primary">lpxB</name>
    <name type="ordered locus">Glov_0767</name>
</gene>
<protein>
    <recommendedName>
        <fullName evidence="1">Lipid-A-disaccharide synthase</fullName>
        <ecNumber evidence="1">2.4.1.182</ecNumber>
    </recommendedName>
</protein>
<organism>
    <name type="scientific">Trichlorobacter lovleyi (strain ATCC BAA-1151 / DSM 17278 / SZ)</name>
    <name type="common">Geobacter lovleyi</name>
    <dbReference type="NCBI Taxonomy" id="398767"/>
    <lineage>
        <taxon>Bacteria</taxon>
        <taxon>Pseudomonadati</taxon>
        <taxon>Thermodesulfobacteriota</taxon>
        <taxon>Desulfuromonadia</taxon>
        <taxon>Geobacterales</taxon>
        <taxon>Geobacteraceae</taxon>
        <taxon>Trichlorobacter</taxon>
    </lineage>
</organism>
<sequence length="383" mass="41770">MAVGRPKRVMIVAGEASGDIYGAGLVRAVQAADPAFSFFGIGGPRMREAGCETLVDSADMAVVGLVEVLKHFDVIAAAFLKLKKILLEDPPDLLILIDYPGFNLRLGKVAKKAGVKVLYYISPQIWAWRQGRVKKIKRLVDHMAVILPFEVPFYEQAGVPVSFVGHPMADLVEVSLTRDQAATSFGLDTSRQIVGLFPGSRRSEVSRLLPTILEAARLLQQCLPGLQFVLPLASTLSDDDLAPWLEGCELPITVTRDRIHDLMRACDAVISVSGTVTLEIALVGTPLVIIYKLSPLTFQLAKRLVKVEHIGLCNIVAGETVARELIQEEASPEQIAGEIGRLLRDAEYNTAFRERLTHVRERLGGGGADRRMAGLVLSMVEQS</sequence>
<reference key="1">
    <citation type="submission" date="2008-05" db="EMBL/GenBank/DDBJ databases">
        <title>Complete sequence of chromosome of Geobacter lovleyi SZ.</title>
        <authorList>
            <consortium name="US DOE Joint Genome Institute"/>
            <person name="Lucas S."/>
            <person name="Copeland A."/>
            <person name="Lapidus A."/>
            <person name="Glavina del Rio T."/>
            <person name="Dalin E."/>
            <person name="Tice H."/>
            <person name="Bruce D."/>
            <person name="Goodwin L."/>
            <person name="Pitluck S."/>
            <person name="Chertkov O."/>
            <person name="Meincke L."/>
            <person name="Brettin T."/>
            <person name="Detter J.C."/>
            <person name="Han C."/>
            <person name="Tapia R."/>
            <person name="Kuske C.R."/>
            <person name="Schmutz J."/>
            <person name="Larimer F."/>
            <person name="Land M."/>
            <person name="Hauser L."/>
            <person name="Kyrpides N."/>
            <person name="Mikhailova N."/>
            <person name="Sung Y."/>
            <person name="Fletcher K.E."/>
            <person name="Ritalahti K.M."/>
            <person name="Loeffler F.E."/>
            <person name="Richardson P."/>
        </authorList>
    </citation>
    <scope>NUCLEOTIDE SEQUENCE [LARGE SCALE GENOMIC DNA]</scope>
    <source>
        <strain>ATCC BAA-1151 / DSM 17278 / SZ</strain>
    </source>
</reference>
<dbReference type="EC" id="2.4.1.182" evidence="1"/>
<dbReference type="EMBL" id="CP001089">
    <property type="protein sequence ID" value="ACD94493.1"/>
    <property type="molecule type" value="Genomic_DNA"/>
</dbReference>
<dbReference type="RefSeq" id="WP_012468849.1">
    <property type="nucleotide sequence ID" value="NC_010814.1"/>
</dbReference>
<dbReference type="SMR" id="B3E4H8"/>
<dbReference type="STRING" id="398767.Glov_0767"/>
<dbReference type="CAZy" id="GT19">
    <property type="family name" value="Glycosyltransferase Family 19"/>
</dbReference>
<dbReference type="KEGG" id="glo:Glov_0767"/>
<dbReference type="eggNOG" id="COG0763">
    <property type="taxonomic scope" value="Bacteria"/>
</dbReference>
<dbReference type="HOGENOM" id="CLU_036577_3_1_7"/>
<dbReference type="OrthoDB" id="9801642at2"/>
<dbReference type="UniPathway" id="UPA00973"/>
<dbReference type="Proteomes" id="UP000002420">
    <property type="component" value="Chromosome"/>
</dbReference>
<dbReference type="GO" id="GO:0016020">
    <property type="term" value="C:membrane"/>
    <property type="evidence" value="ECO:0007669"/>
    <property type="project" value="GOC"/>
</dbReference>
<dbReference type="GO" id="GO:0008915">
    <property type="term" value="F:lipid-A-disaccharide synthase activity"/>
    <property type="evidence" value="ECO:0007669"/>
    <property type="project" value="UniProtKB-UniRule"/>
</dbReference>
<dbReference type="GO" id="GO:0005543">
    <property type="term" value="F:phospholipid binding"/>
    <property type="evidence" value="ECO:0007669"/>
    <property type="project" value="TreeGrafter"/>
</dbReference>
<dbReference type="GO" id="GO:0009245">
    <property type="term" value="P:lipid A biosynthetic process"/>
    <property type="evidence" value="ECO:0007669"/>
    <property type="project" value="UniProtKB-UniRule"/>
</dbReference>
<dbReference type="Gene3D" id="3.40.50.2000">
    <property type="entry name" value="Glycogen Phosphorylase B"/>
    <property type="match status" value="1"/>
</dbReference>
<dbReference type="HAMAP" id="MF_00392">
    <property type="entry name" value="LpxB"/>
    <property type="match status" value="1"/>
</dbReference>
<dbReference type="InterPro" id="IPR003835">
    <property type="entry name" value="Glyco_trans_19"/>
</dbReference>
<dbReference type="NCBIfam" id="TIGR00215">
    <property type="entry name" value="lpxB"/>
    <property type="match status" value="1"/>
</dbReference>
<dbReference type="PANTHER" id="PTHR30372">
    <property type="entry name" value="LIPID-A-DISACCHARIDE SYNTHASE"/>
    <property type="match status" value="1"/>
</dbReference>
<dbReference type="PANTHER" id="PTHR30372:SF4">
    <property type="entry name" value="LIPID-A-DISACCHARIDE SYNTHASE, MITOCHONDRIAL-RELATED"/>
    <property type="match status" value="1"/>
</dbReference>
<dbReference type="Pfam" id="PF02684">
    <property type="entry name" value="LpxB"/>
    <property type="match status" value="1"/>
</dbReference>
<dbReference type="SUPFAM" id="SSF53756">
    <property type="entry name" value="UDP-Glycosyltransferase/glycogen phosphorylase"/>
    <property type="match status" value="1"/>
</dbReference>
<evidence type="ECO:0000255" key="1">
    <source>
        <dbReference type="HAMAP-Rule" id="MF_00392"/>
    </source>
</evidence>
<proteinExistence type="inferred from homology"/>
<comment type="function">
    <text evidence="1">Condensation of UDP-2,3-diacylglucosamine and 2,3-diacylglucosamine-1-phosphate to form lipid A disaccharide, a precursor of lipid A, a phosphorylated glycolipid that anchors the lipopolysaccharide to the outer membrane of the cell.</text>
</comment>
<comment type="catalytic activity">
    <reaction evidence="1">
        <text>a lipid X + a UDP-2-N,3-O-bis[(3R)-3-hydroxyacyl]-alpha-D-glucosamine = a lipid A disaccharide + UDP + H(+)</text>
        <dbReference type="Rhea" id="RHEA:67828"/>
        <dbReference type="ChEBI" id="CHEBI:15378"/>
        <dbReference type="ChEBI" id="CHEBI:58223"/>
        <dbReference type="ChEBI" id="CHEBI:137748"/>
        <dbReference type="ChEBI" id="CHEBI:176338"/>
        <dbReference type="ChEBI" id="CHEBI:176343"/>
        <dbReference type="EC" id="2.4.1.182"/>
    </reaction>
</comment>
<comment type="pathway">
    <text evidence="1">Bacterial outer membrane biogenesis; LPS lipid A biosynthesis.</text>
</comment>
<comment type="similarity">
    <text evidence="1">Belongs to the LpxB family.</text>
</comment>
<name>LPXB_TRIL1</name>
<keyword id="KW-0328">Glycosyltransferase</keyword>
<keyword id="KW-0441">Lipid A biosynthesis</keyword>
<keyword id="KW-0444">Lipid biosynthesis</keyword>
<keyword id="KW-0443">Lipid metabolism</keyword>
<keyword id="KW-1185">Reference proteome</keyword>
<keyword id="KW-0808">Transferase</keyword>
<accession>B3E4H8</accession>